<evidence type="ECO:0000255" key="1">
    <source>
        <dbReference type="HAMAP-Rule" id="MF_00690"/>
    </source>
</evidence>
<dbReference type="EMBL" id="CP001120">
    <property type="protein sequence ID" value="ACF68669.1"/>
    <property type="molecule type" value="Genomic_DNA"/>
</dbReference>
<dbReference type="RefSeq" id="WP_000586568.1">
    <property type="nucleotide sequence ID" value="NC_011083.1"/>
</dbReference>
<dbReference type="SMR" id="B4TKN8"/>
<dbReference type="KEGG" id="seh:SeHA_C3768"/>
<dbReference type="HOGENOM" id="CLU_186759_1_0_6"/>
<dbReference type="Proteomes" id="UP000001866">
    <property type="component" value="Chromosome"/>
</dbReference>
<dbReference type="Gene3D" id="1.10.10.610">
    <property type="entry name" value="YehU-like"/>
    <property type="match status" value="1"/>
</dbReference>
<dbReference type="HAMAP" id="MF_00690">
    <property type="entry name" value="UPF0270"/>
    <property type="match status" value="1"/>
</dbReference>
<dbReference type="InterPro" id="IPR010648">
    <property type="entry name" value="UPF0270"/>
</dbReference>
<dbReference type="InterPro" id="IPR036685">
    <property type="entry name" value="YehU-like_sf"/>
</dbReference>
<dbReference type="NCBIfam" id="NF003438">
    <property type="entry name" value="PRK04966.1"/>
    <property type="match status" value="1"/>
</dbReference>
<dbReference type="Pfam" id="PF06794">
    <property type="entry name" value="UPF0270"/>
    <property type="match status" value="1"/>
</dbReference>
<dbReference type="PIRSF" id="PIRSF006169">
    <property type="entry name" value="UCP006169"/>
    <property type="match status" value="1"/>
</dbReference>
<dbReference type="SUPFAM" id="SSF118001">
    <property type="entry name" value="YehU-like"/>
    <property type="match status" value="1"/>
</dbReference>
<feature type="chain" id="PRO_1000132023" description="UPF0270 protein YheU">
    <location>
        <begin position="1"/>
        <end position="72"/>
    </location>
</feature>
<comment type="similarity">
    <text evidence="1">Belongs to the UPF0270 family.</text>
</comment>
<organism>
    <name type="scientific">Salmonella heidelberg (strain SL476)</name>
    <dbReference type="NCBI Taxonomy" id="454169"/>
    <lineage>
        <taxon>Bacteria</taxon>
        <taxon>Pseudomonadati</taxon>
        <taxon>Pseudomonadota</taxon>
        <taxon>Gammaproteobacteria</taxon>
        <taxon>Enterobacterales</taxon>
        <taxon>Enterobacteriaceae</taxon>
        <taxon>Salmonella</taxon>
    </lineage>
</organism>
<name>YHEU_SALHS</name>
<sequence length="72" mass="8350">MIIPWQGLAPDTLDNLIESFVLREGTDYGEHERSLEQKVADVKRQLQSGEAVLVWSELHETVNIMPKKQFRE</sequence>
<accession>B4TKN8</accession>
<gene>
    <name evidence="1" type="primary">yheU</name>
    <name type="ordered locus">SeHA_C3768</name>
</gene>
<reference key="1">
    <citation type="journal article" date="2011" name="J. Bacteriol.">
        <title>Comparative genomics of 28 Salmonella enterica isolates: evidence for CRISPR-mediated adaptive sublineage evolution.</title>
        <authorList>
            <person name="Fricke W.F."/>
            <person name="Mammel M.K."/>
            <person name="McDermott P.F."/>
            <person name="Tartera C."/>
            <person name="White D.G."/>
            <person name="Leclerc J.E."/>
            <person name="Ravel J."/>
            <person name="Cebula T.A."/>
        </authorList>
    </citation>
    <scope>NUCLEOTIDE SEQUENCE [LARGE SCALE GENOMIC DNA]</scope>
    <source>
        <strain>SL476</strain>
    </source>
</reference>
<proteinExistence type="inferred from homology"/>
<protein>
    <recommendedName>
        <fullName evidence="1">UPF0270 protein YheU</fullName>
    </recommendedName>
</protein>